<proteinExistence type="inferred from homology"/>
<organism>
    <name type="scientific">Halorhodospira halophila (strain DSM 244 / SL1)</name>
    <name type="common">Ectothiorhodospira halophila (strain DSM 244 / SL1)</name>
    <dbReference type="NCBI Taxonomy" id="349124"/>
    <lineage>
        <taxon>Bacteria</taxon>
        <taxon>Pseudomonadati</taxon>
        <taxon>Pseudomonadota</taxon>
        <taxon>Gammaproteobacteria</taxon>
        <taxon>Chromatiales</taxon>
        <taxon>Ectothiorhodospiraceae</taxon>
        <taxon>Halorhodospira</taxon>
    </lineage>
</organism>
<sequence length="291" mass="31645">MSVSANLVKQLRERTGSGMMECKKALVEVDGDLEAAAELMRKKGLAKADKKADRVAAEGRVVAARSEDGKSGVLVEVNSETDFVGNGDEFRAFAESVAQRALDSKVEDLDSLLASEVDGKSVETLRQEMVAQLGENIEVRRFIRYAGDHQVAQYLHGARIGVMVEVQGGDEQLGRDLAMHIAASSPVCVSPDDVPADQLSSEKEVLLAQARESGKPEEIVEKMVEGRLKKHLSEITLLGQPFVKDPDQTVGDLLKAKGAEVTRFARYEVGEGKEKKDESFADEVMAQVRDS</sequence>
<comment type="function">
    <text evidence="1">Associates with the EF-Tu.GDP complex and induces the exchange of GDP to GTP. It remains bound to the aminoacyl-tRNA.EF-Tu.GTP complex up to the GTP hydrolysis stage on the ribosome.</text>
</comment>
<comment type="subcellular location">
    <subcellularLocation>
        <location evidence="1">Cytoplasm</location>
    </subcellularLocation>
</comment>
<comment type="similarity">
    <text evidence="1">Belongs to the EF-Ts family.</text>
</comment>
<keyword id="KW-0963">Cytoplasm</keyword>
<keyword id="KW-0251">Elongation factor</keyword>
<keyword id="KW-0648">Protein biosynthesis</keyword>
<keyword id="KW-1185">Reference proteome</keyword>
<name>EFTS_HALHL</name>
<protein>
    <recommendedName>
        <fullName evidence="1">Elongation factor Ts</fullName>
        <shortName evidence="1">EF-Ts</shortName>
    </recommendedName>
</protein>
<dbReference type="EMBL" id="CP000544">
    <property type="protein sequence ID" value="ABM62232.1"/>
    <property type="molecule type" value="Genomic_DNA"/>
</dbReference>
<dbReference type="RefSeq" id="WP_011814254.1">
    <property type="nucleotide sequence ID" value="NC_008789.1"/>
</dbReference>
<dbReference type="SMR" id="A1WX20"/>
<dbReference type="STRING" id="349124.Hhal_1465"/>
<dbReference type="KEGG" id="hha:Hhal_1465"/>
<dbReference type="eggNOG" id="COG0264">
    <property type="taxonomic scope" value="Bacteria"/>
</dbReference>
<dbReference type="HOGENOM" id="CLU_047155_0_0_6"/>
<dbReference type="OrthoDB" id="9808348at2"/>
<dbReference type="Proteomes" id="UP000000647">
    <property type="component" value="Chromosome"/>
</dbReference>
<dbReference type="GO" id="GO:0005737">
    <property type="term" value="C:cytoplasm"/>
    <property type="evidence" value="ECO:0007669"/>
    <property type="project" value="UniProtKB-SubCell"/>
</dbReference>
<dbReference type="GO" id="GO:0003746">
    <property type="term" value="F:translation elongation factor activity"/>
    <property type="evidence" value="ECO:0007669"/>
    <property type="project" value="UniProtKB-UniRule"/>
</dbReference>
<dbReference type="CDD" id="cd14275">
    <property type="entry name" value="UBA_EF-Ts"/>
    <property type="match status" value="1"/>
</dbReference>
<dbReference type="FunFam" id="1.10.286.20:FF:000001">
    <property type="entry name" value="Elongation factor Ts"/>
    <property type="match status" value="1"/>
</dbReference>
<dbReference type="FunFam" id="1.10.8.10:FF:000001">
    <property type="entry name" value="Elongation factor Ts"/>
    <property type="match status" value="1"/>
</dbReference>
<dbReference type="Gene3D" id="1.10.286.20">
    <property type="match status" value="1"/>
</dbReference>
<dbReference type="Gene3D" id="1.10.8.10">
    <property type="entry name" value="DNA helicase RuvA subunit, C-terminal domain"/>
    <property type="match status" value="1"/>
</dbReference>
<dbReference type="Gene3D" id="3.30.479.20">
    <property type="entry name" value="Elongation factor Ts, dimerisation domain"/>
    <property type="match status" value="2"/>
</dbReference>
<dbReference type="HAMAP" id="MF_00050">
    <property type="entry name" value="EF_Ts"/>
    <property type="match status" value="1"/>
</dbReference>
<dbReference type="InterPro" id="IPR036402">
    <property type="entry name" value="EF-Ts_dimer_sf"/>
</dbReference>
<dbReference type="InterPro" id="IPR001816">
    <property type="entry name" value="Transl_elong_EFTs/EF1B"/>
</dbReference>
<dbReference type="InterPro" id="IPR014039">
    <property type="entry name" value="Transl_elong_EFTs/EF1B_dimer"/>
</dbReference>
<dbReference type="InterPro" id="IPR018101">
    <property type="entry name" value="Transl_elong_Ts_CS"/>
</dbReference>
<dbReference type="InterPro" id="IPR009060">
    <property type="entry name" value="UBA-like_sf"/>
</dbReference>
<dbReference type="NCBIfam" id="TIGR00116">
    <property type="entry name" value="tsf"/>
    <property type="match status" value="1"/>
</dbReference>
<dbReference type="PANTHER" id="PTHR11741">
    <property type="entry name" value="ELONGATION FACTOR TS"/>
    <property type="match status" value="1"/>
</dbReference>
<dbReference type="PANTHER" id="PTHR11741:SF0">
    <property type="entry name" value="ELONGATION FACTOR TS, MITOCHONDRIAL"/>
    <property type="match status" value="1"/>
</dbReference>
<dbReference type="Pfam" id="PF00889">
    <property type="entry name" value="EF_TS"/>
    <property type="match status" value="1"/>
</dbReference>
<dbReference type="SUPFAM" id="SSF54713">
    <property type="entry name" value="Elongation factor Ts (EF-Ts), dimerisation domain"/>
    <property type="match status" value="2"/>
</dbReference>
<dbReference type="SUPFAM" id="SSF46934">
    <property type="entry name" value="UBA-like"/>
    <property type="match status" value="1"/>
</dbReference>
<dbReference type="PROSITE" id="PS01126">
    <property type="entry name" value="EF_TS_1"/>
    <property type="match status" value="1"/>
</dbReference>
<accession>A1WX20</accession>
<feature type="chain" id="PRO_1000006105" description="Elongation factor Ts">
    <location>
        <begin position="1"/>
        <end position="291"/>
    </location>
</feature>
<feature type="region of interest" description="Involved in Mg(2+) ion dislocation from EF-Tu" evidence="1">
    <location>
        <begin position="81"/>
        <end position="84"/>
    </location>
</feature>
<feature type="region of interest" description="Disordered" evidence="2">
    <location>
        <begin position="271"/>
        <end position="291"/>
    </location>
</feature>
<reference key="1">
    <citation type="submission" date="2006-12" db="EMBL/GenBank/DDBJ databases">
        <title>Complete sequence of Halorhodospira halophila SL1.</title>
        <authorList>
            <consortium name="US DOE Joint Genome Institute"/>
            <person name="Copeland A."/>
            <person name="Lucas S."/>
            <person name="Lapidus A."/>
            <person name="Barry K."/>
            <person name="Detter J.C."/>
            <person name="Glavina del Rio T."/>
            <person name="Hammon N."/>
            <person name="Israni S."/>
            <person name="Dalin E."/>
            <person name="Tice H."/>
            <person name="Pitluck S."/>
            <person name="Saunders E."/>
            <person name="Brettin T."/>
            <person name="Bruce D."/>
            <person name="Han C."/>
            <person name="Tapia R."/>
            <person name="Schmutz J."/>
            <person name="Larimer F."/>
            <person name="Land M."/>
            <person name="Hauser L."/>
            <person name="Kyrpides N."/>
            <person name="Mikhailova N."/>
            <person name="Hoff W."/>
            <person name="Richardson P."/>
        </authorList>
    </citation>
    <scope>NUCLEOTIDE SEQUENCE [LARGE SCALE GENOMIC DNA]</scope>
    <source>
        <strain>DSM 244 / SL1</strain>
    </source>
</reference>
<gene>
    <name evidence="1" type="primary">tsf</name>
    <name type="ordered locus">Hhal_1465</name>
</gene>
<evidence type="ECO:0000255" key="1">
    <source>
        <dbReference type="HAMAP-Rule" id="MF_00050"/>
    </source>
</evidence>
<evidence type="ECO:0000256" key="2">
    <source>
        <dbReference type="SAM" id="MobiDB-lite"/>
    </source>
</evidence>